<protein>
    <recommendedName>
        <fullName evidence="20">Cadherin-related family member 5</fullName>
    </recommendedName>
    <alternativeName>
        <fullName evidence="22">Mu-protocadherin</fullName>
    </alternativeName>
    <alternativeName>
        <fullName evidence="15">Mucin and cadherin-like protein</fullName>
    </alternativeName>
    <alternativeName>
        <fullName evidence="18">Mucin-like protocadherin</fullName>
        <shortName evidence="18">MLPCDH</shortName>
    </alternativeName>
</protein>
<evidence type="ECO:0000250" key="1">
    <source>
        <dbReference type="UniProtKB" id="Q8VHF2"/>
    </source>
</evidence>
<evidence type="ECO:0000250" key="2">
    <source>
        <dbReference type="UniProtKB" id="Q9JIK1"/>
    </source>
</evidence>
<evidence type="ECO:0000255" key="3"/>
<evidence type="ECO:0000255" key="4">
    <source>
        <dbReference type="PROSITE-ProRule" id="PRU00043"/>
    </source>
</evidence>
<evidence type="ECO:0000256" key="5">
    <source>
        <dbReference type="SAM" id="MobiDB-lite"/>
    </source>
</evidence>
<evidence type="ECO:0000269" key="6">
    <source>
    </source>
</evidence>
<evidence type="ECO:0000269" key="7">
    <source>
    </source>
</evidence>
<evidence type="ECO:0000269" key="8">
    <source>
    </source>
</evidence>
<evidence type="ECO:0000269" key="9">
    <source>
    </source>
</evidence>
<evidence type="ECO:0000269" key="10">
    <source>
    </source>
</evidence>
<evidence type="ECO:0000269" key="11">
    <source>
    </source>
</evidence>
<evidence type="ECO:0000269" key="12">
    <source>
    </source>
</evidence>
<evidence type="ECO:0000269" key="13">
    <source>
    </source>
</evidence>
<evidence type="ECO:0000269" key="14">
    <source ref="2"/>
</evidence>
<evidence type="ECO:0000303" key="15">
    <source>
    </source>
</evidence>
<evidence type="ECO:0000303" key="16">
    <source>
    </source>
</evidence>
<evidence type="ECO:0000303" key="17">
    <source>
    </source>
</evidence>
<evidence type="ECO:0000303" key="18">
    <source>
    </source>
</evidence>
<evidence type="ECO:0000303" key="19">
    <source ref="2"/>
</evidence>
<evidence type="ECO:0000305" key="20"/>
<evidence type="ECO:0000312" key="21">
    <source>
        <dbReference type="EMBL" id="AAG16731.1"/>
    </source>
</evidence>
<evidence type="ECO:0000312" key="22">
    <source>
        <dbReference type="EMBL" id="AAG33495.1"/>
    </source>
</evidence>
<evidence type="ECO:0000312" key="23">
    <source>
        <dbReference type="EMBL" id="AAQ88734.1"/>
    </source>
</evidence>
<evidence type="ECO:0000312" key="24">
    <source>
        <dbReference type="EMBL" id="BAA91021.1"/>
    </source>
</evidence>
<evidence type="ECO:0000312" key="25">
    <source>
        <dbReference type="EMBL" id="BAA91130.1"/>
    </source>
</evidence>
<evidence type="ECO:0000312" key="26">
    <source>
        <dbReference type="HGNC" id="HGNC:7521"/>
    </source>
</evidence>
<evidence type="ECO:0007744" key="27">
    <source>
    </source>
</evidence>
<evidence type="ECO:0007829" key="28">
    <source>
        <dbReference type="PDB" id="6OAE"/>
    </source>
</evidence>
<name>CDHR5_HUMAN</name>
<reference evidence="20" key="1">
    <citation type="journal article" date="2000" name="Genomics">
        <title>Characterization of a 500-kb contig spanning the region between c-Ha-Ras and MUC2 on chromosome 11p15.5.</title>
        <authorList>
            <person name="Paris M.J."/>
            <person name="Williams B.R.G."/>
        </authorList>
    </citation>
    <scope>NUCLEOTIDE SEQUENCE [GENOMIC DNA / MRNA] (ISOFORM 1)</scope>
    <scope>VARIANTS PRO-165; SER-357; SER-521 AND SER-702</scope>
</reference>
<reference evidence="20" key="2">
    <citation type="submission" date="2000-08" db="EMBL/GenBank/DDBJ databases">
        <title>Cloning and characterization of human mu-protocadherin.</title>
        <authorList>
            <person name="Soleiman A."/>
            <person name="Krieger S."/>
            <person name="Haase A."/>
            <person name="Hantusch B."/>
        </authorList>
    </citation>
    <scope>NUCLEOTIDE SEQUENCE [MRNA] (ISOFORMS 1 AND 2)</scope>
    <scope>VARIANTS SER-357; SER-521 AND SER-702</scope>
    <source>
        <tissue evidence="22">Kidney</tissue>
    </source>
</reference>
<reference evidence="20" key="3">
    <citation type="journal article" date="2003" name="Genome Res.">
        <title>The secreted protein discovery initiative (SPDI), a large-scale effort to identify novel human secreted and transmembrane proteins: a bioinformatics assessment.</title>
        <authorList>
            <person name="Clark H.F."/>
            <person name="Gurney A.L."/>
            <person name="Abaya E."/>
            <person name="Baker K."/>
            <person name="Baldwin D.T."/>
            <person name="Brush J."/>
            <person name="Chen J."/>
            <person name="Chow B."/>
            <person name="Chui C."/>
            <person name="Crowley C."/>
            <person name="Currell B."/>
            <person name="Deuel B."/>
            <person name="Dowd P."/>
            <person name="Eaton D."/>
            <person name="Foster J.S."/>
            <person name="Grimaldi C."/>
            <person name="Gu Q."/>
            <person name="Hass P.E."/>
            <person name="Heldens S."/>
            <person name="Huang A."/>
            <person name="Kim H.S."/>
            <person name="Klimowski L."/>
            <person name="Jin Y."/>
            <person name="Johnson S."/>
            <person name="Lee J."/>
            <person name="Lewis L."/>
            <person name="Liao D."/>
            <person name="Mark M.R."/>
            <person name="Robbie E."/>
            <person name="Sanchez C."/>
            <person name="Schoenfeld J."/>
            <person name="Seshagiri S."/>
            <person name="Simmons L."/>
            <person name="Singh J."/>
            <person name="Smith V."/>
            <person name="Stinson J."/>
            <person name="Vagts A."/>
            <person name="Vandlen R.L."/>
            <person name="Watanabe C."/>
            <person name="Wieand D."/>
            <person name="Woods K."/>
            <person name="Xie M.-H."/>
            <person name="Yansura D.G."/>
            <person name="Yi S."/>
            <person name="Yu G."/>
            <person name="Yuan J."/>
            <person name="Zhang M."/>
            <person name="Zhang Z."/>
            <person name="Goddard A.D."/>
            <person name="Wood W.I."/>
            <person name="Godowski P.J."/>
            <person name="Gray A.M."/>
        </authorList>
    </citation>
    <scope>NUCLEOTIDE SEQUENCE [LARGE SCALE MRNA] (ISOFORM 3)</scope>
    <scope>VARIANTS SER-357 AND SER-702</scope>
</reference>
<reference evidence="20" key="4">
    <citation type="journal article" date="2004" name="Nat. Genet.">
        <title>Complete sequencing and characterization of 21,243 full-length human cDNAs.</title>
        <authorList>
            <person name="Ota T."/>
            <person name="Suzuki Y."/>
            <person name="Nishikawa T."/>
            <person name="Otsuki T."/>
            <person name="Sugiyama T."/>
            <person name="Irie R."/>
            <person name="Wakamatsu A."/>
            <person name="Hayashi K."/>
            <person name="Sato H."/>
            <person name="Nagai K."/>
            <person name="Kimura K."/>
            <person name="Makita H."/>
            <person name="Sekine M."/>
            <person name="Obayashi M."/>
            <person name="Nishi T."/>
            <person name="Shibahara T."/>
            <person name="Tanaka T."/>
            <person name="Ishii S."/>
            <person name="Yamamoto J."/>
            <person name="Saito K."/>
            <person name="Kawai Y."/>
            <person name="Isono Y."/>
            <person name="Nakamura Y."/>
            <person name="Nagahari K."/>
            <person name="Murakami K."/>
            <person name="Yasuda T."/>
            <person name="Iwayanagi T."/>
            <person name="Wagatsuma M."/>
            <person name="Shiratori A."/>
            <person name="Sudo H."/>
            <person name="Hosoiri T."/>
            <person name="Kaku Y."/>
            <person name="Kodaira H."/>
            <person name="Kondo H."/>
            <person name="Sugawara M."/>
            <person name="Takahashi M."/>
            <person name="Kanda K."/>
            <person name="Yokoi T."/>
            <person name="Furuya T."/>
            <person name="Kikkawa E."/>
            <person name="Omura Y."/>
            <person name="Abe K."/>
            <person name="Kamihara K."/>
            <person name="Katsuta N."/>
            <person name="Sato K."/>
            <person name="Tanikawa M."/>
            <person name="Yamazaki M."/>
            <person name="Ninomiya K."/>
            <person name="Ishibashi T."/>
            <person name="Yamashita H."/>
            <person name="Murakawa K."/>
            <person name="Fujimori K."/>
            <person name="Tanai H."/>
            <person name="Kimata M."/>
            <person name="Watanabe M."/>
            <person name="Hiraoka S."/>
            <person name="Chiba Y."/>
            <person name="Ishida S."/>
            <person name="Ono Y."/>
            <person name="Takiguchi S."/>
            <person name="Watanabe S."/>
            <person name="Yosida M."/>
            <person name="Hotuta T."/>
            <person name="Kusano J."/>
            <person name="Kanehori K."/>
            <person name="Takahashi-Fujii A."/>
            <person name="Hara H."/>
            <person name="Tanase T.-O."/>
            <person name="Nomura Y."/>
            <person name="Togiya S."/>
            <person name="Komai F."/>
            <person name="Hara R."/>
            <person name="Takeuchi K."/>
            <person name="Arita M."/>
            <person name="Imose N."/>
            <person name="Musashino K."/>
            <person name="Yuuki H."/>
            <person name="Oshima A."/>
            <person name="Sasaki N."/>
            <person name="Aotsuka S."/>
            <person name="Yoshikawa Y."/>
            <person name="Matsunawa H."/>
            <person name="Ichihara T."/>
            <person name="Shiohata N."/>
            <person name="Sano S."/>
            <person name="Moriya S."/>
            <person name="Momiyama H."/>
            <person name="Satoh N."/>
            <person name="Takami S."/>
            <person name="Terashima Y."/>
            <person name="Suzuki O."/>
            <person name="Nakagawa S."/>
            <person name="Senoh A."/>
            <person name="Mizoguchi H."/>
            <person name="Goto Y."/>
            <person name="Shimizu F."/>
            <person name="Wakebe H."/>
            <person name="Hishigaki H."/>
            <person name="Watanabe T."/>
            <person name="Sugiyama A."/>
            <person name="Takemoto M."/>
            <person name="Kawakami B."/>
            <person name="Yamazaki M."/>
            <person name="Watanabe K."/>
            <person name="Kumagai A."/>
            <person name="Itakura S."/>
            <person name="Fukuzumi Y."/>
            <person name="Fujimori Y."/>
            <person name="Komiyama M."/>
            <person name="Tashiro H."/>
            <person name="Tanigami A."/>
            <person name="Fujiwara T."/>
            <person name="Ono T."/>
            <person name="Yamada K."/>
            <person name="Fujii Y."/>
            <person name="Ozaki K."/>
            <person name="Hirao M."/>
            <person name="Ohmori Y."/>
            <person name="Kawabata A."/>
            <person name="Hikiji T."/>
            <person name="Kobatake N."/>
            <person name="Inagaki H."/>
            <person name="Ikema Y."/>
            <person name="Okamoto S."/>
            <person name="Okitani R."/>
            <person name="Kawakami T."/>
            <person name="Noguchi S."/>
            <person name="Itoh T."/>
            <person name="Shigeta K."/>
            <person name="Senba T."/>
            <person name="Matsumura K."/>
            <person name="Nakajima Y."/>
            <person name="Mizuno T."/>
            <person name="Morinaga M."/>
            <person name="Sasaki M."/>
            <person name="Togashi T."/>
            <person name="Oyama M."/>
            <person name="Hata H."/>
            <person name="Watanabe M."/>
            <person name="Komatsu T."/>
            <person name="Mizushima-Sugano J."/>
            <person name="Satoh T."/>
            <person name="Shirai Y."/>
            <person name="Takahashi Y."/>
            <person name="Nakagawa K."/>
            <person name="Okumura K."/>
            <person name="Nagase T."/>
            <person name="Nomura N."/>
            <person name="Kikuchi H."/>
            <person name="Masuho Y."/>
            <person name="Yamashita R."/>
            <person name="Nakai K."/>
            <person name="Yada T."/>
            <person name="Nakamura Y."/>
            <person name="Ohara O."/>
            <person name="Isogai T."/>
            <person name="Sugano S."/>
        </authorList>
    </citation>
    <scope>NUCLEOTIDE SEQUENCE [LARGE SCALE MRNA] (ISOFORMS 1 AND 2)</scope>
    <scope>VARIANTS SER-357; SER-521 AND SER-702</scope>
    <source>
        <tissue evidence="24">Colon mucosa</tissue>
        <tissue evidence="25">Ileal mucosa</tissue>
    </source>
</reference>
<reference key="5">
    <citation type="journal article" date="2006" name="Nature">
        <title>Human chromosome 11 DNA sequence and analysis including novel gene identification.</title>
        <authorList>
            <person name="Taylor T.D."/>
            <person name="Noguchi H."/>
            <person name="Totoki Y."/>
            <person name="Toyoda A."/>
            <person name="Kuroki Y."/>
            <person name="Dewar K."/>
            <person name="Lloyd C."/>
            <person name="Itoh T."/>
            <person name="Takeda T."/>
            <person name="Kim D.-W."/>
            <person name="She X."/>
            <person name="Barlow K.F."/>
            <person name="Bloom T."/>
            <person name="Bruford E."/>
            <person name="Chang J.L."/>
            <person name="Cuomo C.A."/>
            <person name="Eichler E."/>
            <person name="FitzGerald M.G."/>
            <person name="Jaffe D.B."/>
            <person name="LaButti K."/>
            <person name="Nicol R."/>
            <person name="Park H.-S."/>
            <person name="Seaman C."/>
            <person name="Sougnez C."/>
            <person name="Yang X."/>
            <person name="Zimmer A.R."/>
            <person name="Zody M.C."/>
            <person name="Birren B.W."/>
            <person name="Nusbaum C."/>
            <person name="Fujiyama A."/>
            <person name="Hattori M."/>
            <person name="Rogers J."/>
            <person name="Lander E.S."/>
            <person name="Sakaki Y."/>
        </authorList>
    </citation>
    <scope>NUCLEOTIDE SEQUENCE [LARGE SCALE GENOMIC DNA]</scope>
</reference>
<reference evidence="20" key="6">
    <citation type="journal article" date="2002" name="Am. J. Physiol.">
        <title>Identification and expression analysis of the human mu-protocadherin gene in fetal and adult kidneys.</title>
        <authorList>
            <person name="Goldberg M."/>
            <person name="Wei M."/>
            <person name="Tycko B."/>
            <person name="Falikovich I."/>
            <person name="Warburton D."/>
        </authorList>
    </citation>
    <scope>TISSUE SPECIFICITY</scope>
</reference>
<reference key="7">
    <citation type="journal article" date="2005" name="J. Proteome Res.">
        <title>Human plasma N-glycoproteome analysis by immunoaffinity subtraction, hydrazide chemistry, and mass spectrometry.</title>
        <authorList>
            <person name="Liu T."/>
            <person name="Qian W.-J."/>
            <person name="Gritsenko M.A."/>
            <person name="Camp D.G. II"/>
            <person name="Monroe M.E."/>
            <person name="Moore R.J."/>
            <person name="Smith R.D."/>
        </authorList>
    </citation>
    <scope>GLYCOSYLATION [LARGE SCALE ANALYSIS] AT ASN-81 AND ASN-308</scope>
    <source>
        <tissue>Plasma</tissue>
    </source>
</reference>
<reference key="8">
    <citation type="journal article" date="2014" name="Cell">
        <title>Intestinal brush border assembly driven by protocadherin-based intermicrovillar adhesion.</title>
        <authorList>
            <person name="Crawley S.W."/>
            <person name="Shifrin D.A. Jr."/>
            <person name="Grega-Larson N.E."/>
            <person name="McConnell R.E."/>
            <person name="Benesh A.E."/>
            <person name="Mao S."/>
            <person name="Zheng Y."/>
            <person name="Zheng Q.Y."/>
            <person name="Nam K.T."/>
            <person name="Millis B.A."/>
            <person name="Kachar B."/>
            <person name="Tyska M.J."/>
        </authorList>
    </citation>
    <scope>FUNCTION</scope>
    <scope>SUBCELLULAR LOCATION</scope>
    <scope>TOPOLOGY</scope>
    <scope>INTERACTION WITH MYO7B AND USH1C</scope>
    <scope>MUTAGENESIS OF ARG-109 AND ILE-845</scope>
    <scope>REGION</scope>
    <scope>TISSUE SPECIFICITY</scope>
</reference>
<reference key="9">
    <citation type="journal article" date="2014" name="J. Proteomics">
        <title>An enzyme assisted RP-RPLC approach for in-depth analysis of human liver phosphoproteome.</title>
        <authorList>
            <person name="Bian Y."/>
            <person name="Song C."/>
            <person name="Cheng K."/>
            <person name="Dong M."/>
            <person name="Wang F."/>
            <person name="Huang J."/>
            <person name="Sun D."/>
            <person name="Wang L."/>
            <person name="Ye M."/>
            <person name="Zou H."/>
        </authorList>
    </citation>
    <scope>PHOSPHORYLATION [LARGE SCALE ANALYSIS] AT THR-810; SER-817; SER-819 AND SER-821</scope>
    <scope>IDENTIFICATION BY MASS SPECTROMETRY [LARGE SCALE ANALYSIS]</scope>
    <source>
        <tissue>Liver</tissue>
    </source>
</reference>
<reference key="10">
    <citation type="journal article" date="2016" name="Dev. Cell">
        <title>ANKS4B is essential for intermicrovillar adhesion complex formation.</title>
        <authorList>
            <person name="Crawley S.W."/>
            <person name="Weck M.L."/>
            <person name="Grega-Larson N.E."/>
            <person name="Shifrin D.A. Jr."/>
            <person name="Tyska M.J."/>
        </authorList>
    </citation>
    <scope>IDENTIFICATION OF THE IMAC COMPLEX</scope>
</reference>
<reference key="11">
    <citation type="journal article" date="2020" name="J. Biol. Chem.">
        <title>The small EF-hand protein CALML4 functions as a critical myosin light chain within the intermicrovillar adhesion complex.</title>
        <authorList>
            <person name="Choi M.S."/>
            <person name="Graves M.J."/>
            <person name="Matoo S."/>
            <person name="Storad Z.A."/>
            <person name="El Sheikh Idris R.A."/>
            <person name="Weck M.L."/>
            <person name="Smith Z.B."/>
            <person name="Tyska M.J."/>
            <person name="Crawley S.W."/>
        </authorList>
    </citation>
    <scope>IDENTIFICATION OF THE IMAC COMPLEX</scope>
    <scope>SUBCELLULAR LOCATION</scope>
</reference>
<feature type="signal peptide" evidence="3">
    <location>
        <begin position="1"/>
        <end position="25"/>
    </location>
</feature>
<feature type="chain" id="PRO_0000004012" description="Cadherin-related family member 5">
    <location>
        <begin position="26"/>
        <end position="845"/>
    </location>
</feature>
<feature type="topological domain" description="Extracellular" evidence="3">
    <location>
        <begin position="26"/>
        <end position="669"/>
    </location>
</feature>
<feature type="transmembrane region" description="Helical" evidence="3">
    <location>
        <begin position="670"/>
        <end position="690"/>
    </location>
</feature>
<feature type="topological domain" description="Cytoplasmic" evidence="3">
    <location>
        <begin position="691"/>
        <end position="845"/>
    </location>
</feature>
<feature type="domain" description="Cadherin 1" evidence="4 20">
    <location>
        <begin position="71"/>
        <end position="124"/>
    </location>
</feature>
<feature type="domain" description="Cadherin 2" evidence="4 20">
    <location>
        <begin position="125"/>
        <end position="237"/>
    </location>
</feature>
<feature type="domain" description="Cadherin 3" evidence="4 20">
    <location>
        <begin position="249"/>
        <end position="354"/>
    </location>
</feature>
<feature type="domain" description="Cadherin 4" evidence="4 20">
    <location>
        <begin position="355"/>
        <end position="459"/>
    </location>
</feature>
<feature type="repeat" description="1" evidence="20">
    <location>
        <begin position="540"/>
        <end position="570"/>
    </location>
</feature>
<feature type="repeat" description="2" evidence="20">
    <location>
        <begin position="571"/>
        <end position="601"/>
    </location>
</feature>
<feature type="repeat" description="3" evidence="20">
    <location>
        <begin position="602"/>
        <end position="631"/>
    </location>
</feature>
<feature type="repeat" description="4; truncated">
    <location>
        <begin position="632"/>
        <end position="645"/>
    </location>
</feature>
<feature type="region of interest" description="Disordered" evidence="5">
    <location>
        <begin position="452"/>
        <end position="661"/>
    </location>
</feature>
<feature type="region of interest" description="4 X 31 AA approximate tandem repeats">
    <location>
        <begin position="540"/>
        <end position="645"/>
    </location>
</feature>
<feature type="region of interest" description="Mediates interaction with USH1C and MYO7B and is required for proper localization to microvilli tips and function in microvilli organization" evidence="11">
    <location>
        <begin position="691"/>
        <end position="845"/>
    </location>
</feature>
<feature type="region of interest" description="Disordered" evidence="5">
    <location>
        <begin position="724"/>
        <end position="789"/>
    </location>
</feature>
<feature type="region of interest" description="Disordered" evidence="5">
    <location>
        <begin position="811"/>
        <end position="845"/>
    </location>
</feature>
<feature type="compositionally biased region" description="Low complexity" evidence="5">
    <location>
        <begin position="506"/>
        <end position="518"/>
    </location>
</feature>
<feature type="compositionally biased region" description="Polar residues" evidence="5">
    <location>
        <begin position="539"/>
        <end position="549"/>
    </location>
</feature>
<feature type="compositionally biased region" description="Polar residues" evidence="5">
    <location>
        <begin position="556"/>
        <end position="594"/>
    </location>
</feature>
<feature type="compositionally biased region" description="Polar residues" evidence="5">
    <location>
        <begin position="602"/>
        <end position="611"/>
    </location>
</feature>
<feature type="compositionally biased region" description="Low complexity" evidence="5">
    <location>
        <begin position="633"/>
        <end position="652"/>
    </location>
</feature>
<feature type="compositionally biased region" description="Pro residues" evidence="5">
    <location>
        <begin position="729"/>
        <end position="762"/>
    </location>
</feature>
<feature type="compositionally biased region" description="Low complexity" evidence="5">
    <location>
        <begin position="835"/>
        <end position="845"/>
    </location>
</feature>
<feature type="modified residue" description="Phosphoserine" evidence="1">
    <location>
        <position position="770"/>
    </location>
</feature>
<feature type="modified residue" description="Phosphothreonine" evidence="27">
    <location>
        <position position="810"/>
    </location>
</feature>
<feature type="modified residue" description="Phosphoserine" evidence="27">
    <location>
        <position position="817"/>
    </location>
</feature>
<feature type="modified residue" description="Phosphoserine" evidence="27">
    <location>
        <position position="819"/>
    </location>
</feature>
<feature type="modified residue" description="Phosphoserine" evidence="27">
    <location>
        <position position="821"/>
    </location>
</feature>
<feature type="glycosylation site" description="N-linked (GlcNAc...) asparagine" evidence="20">
    <location>
        <position position="44"/>
    </location>
</feature>
<feature type="glycosylation site" description="N-linked (GlcNAc...) asparagine" evidence="10">
    <location>
        <position position="81"/>
    </location>
</feature>
<feature type="glycosylation site" description="N-linked (GlcNAc...) asparagine" evidence="20">
    <location>
        <position position="140"/>
    </location>
</feature>
<feature type="glycosylation site" description="N-linked (GlcNAc...) asparagine" evidence="20">
    <location>
        <position position="198"/>
    </location>
</feature>
<feature type="glycosylation site" description="N-linked (GlcNAc...) asparagine" evidence="20">
    <location>
        <position position="297"/>
    </location>
</feature>
<feature type="glycosylation site" description="N-linked (GlcNAc...) asparagine" evidence="10">
    <location>
        <position position="308"/>
    </location>
</feature>
<feature type="glycosylation site" description="N-linked (GlcNAc...) asparagine" evidence="20">
    <location>
        <position position="405"/>
    </location>
</feature>
<feature type="glycosylation site" description="N-linked (GlcNAc...) asparagine" evidence="20">
    <location>
        <position position="526"/>
    </location>
</feature>
<feature type="splice variant" id="VSP_050693" description="In isoform 2." evidence="17 19">
    <location>
        <begin position="460"/>
        <end position="653"/>
    </location>
</feature>
<feature type="splice variant" id="VSP_050692" description="In isoform 3." evidence="16">
    <location>
        <begin position="460"/>
        <end position="465"/>
    </location>
</feature>
<feature type="sequence variant" id="VAR_060412" description="In dbSNP:rs2740374." evidence="6">
    <original>Q</original>
    <variation>P</variation>
    <location>
        <position position="165"/>
    </location>
</feature>
<feature type="sequence variant" id="VAR_017920" description="In dbSNP:rs2246614." evidence="6 8 9 14">
    <original>R</original>
    <variation>S</variation>
    <location>
        <position position="357"/>
    </location>
</feature>
<feature type="sequence variant" id="VAR_017921" description="In dbSNP:rs2306066.">
    <original>D</original>
    <variation>N</variation>
    <location>
        <position position="389"/>
    </location>
</feature>
<feature type="sequence variant" id="VAR_060413" description="In dbSNP:rs2740375." evidence="6 9 14">
    <original>P</original>
    <variation>S</variation>
    <location>
        <position position="521"/>
    </location>
</feature>
<feature type="sequence variant" id="VAR_059192" description="In dbSNP:rs2740379." evidence="6 8 9 14">
    <original>C</original>
    <variation>S</variation>
    <location>
        <position position="702"/>
    </location>
</feature>
<feature type="mutagenesis site" description="Loss of binding to CDHR2." evidence="11">
    <original>R</original>
    <variation>G</variation>
    <location>
        <position position="109"/>
    </location>
</feature>
<feature type="mutagenesis site" description="Loss of interaction with USH1C." evidence="11">
    <original>I</original>
    <variation>R</variation>
    <location>
        <position position="845"/>
    </location>
</feature>
<feature type="sequence conflict" description="In Ref. 4; BAA91021." evidence="20" ref="4">
    <original>R</original>
    <variation>S</variation>
    <location>
        <position position="313"/>
    </location>
</feature>
<feature type="sequence conflict" description="In Ref. 4; BAB15052." evidence="20" ref="4">
    <original>V</original>
    <variation>A</variation>
    <location>
        <position position="373"/>
    </location>
</feature>
<feature type="sequence conflict" description="In Ref. 2; AAG33495 and 4; BAA91021." evidence="20" ref="2 4">
    <original>S</original>
    <variation>G</variation>
    <location>
        <position position="476"/>
    </location>
</feature>
<feature type="sequence conflict" description="In Ref. 2; AAG33495 and 4; BAA91021." evidence="20" ref="2 4">
    <original>G</original>
    <variation>E</variation>
    <location>
        <position position="498"/>
    </location>
</feature>
<feature type="sequence conflict" description="In Ref. 1; AAG16733, 2; AAG33495 and 4; BAA91021." evidence="20" ref="1 2 4">
    <original>A</original>
    <variation>V</variation>
    <location>
        <position position="571"/>
    </location>
</feature>
<feature type="sequence conflict" description="In Ref. 2; AAG30821/AAG33495 and 4; BAA91130." evidence="20" ref="2 4">
    <original>N</original>
    <variation>S</variation>
    <location>
        <position position="807"/>
    </location>
</feature>
<feature type="strand" evidence="28">
    <location>
        <begin position="36"/>
        <end position="40"/>
    </location>
</feature>
<feature type="strand" evidence="28">
    <location>
        <begin position="49"/>
        <end position="51"/>
    </location>
</feature>
<feature type="strand" evidence="28">
    <location>
        <begin position="59"/>
        <end position="62"/>
    </location>
</feature>
<feature type="turn" evidence="28">
    <location>
        <begin position="68"/>
        <end position="70"/>
    </location>
</feature>
<feature type="strand" evidence="28">
    <location>
        <begin position="71"/>
        <end position="74"/>
    </location>
</feature>
<feature type="strand" evidence="28">
    <location>
        <begin position="77"/>
        <end position="80"/>
    </location>
</feature>
<feature type="turn" evidence="28">
    <location>
        <begin position="86"/>
        <end position="88"/>
    </location>
</feature>
<feature type="strand" evidence="28">
    <location>
        <begin position="90"/>
        <end position="100"/>
    </location>
</feature>
<feature type="strand" evidence="28">
    <location>
        <begin position="103"/>
        <end position="115"/>
    </location>
</feature>
<feature type="strand" evidence="28">
    <location>
        <begin position="127"/>
        <end position="134"/>
    </location>
</feature>
<feature type="strand" evidence="28">
    <location>
        <begin position="142"/>
        <end position="144"/>
    </location>
</feature>
<feature type="helix" evidence="28">
    <location>
        <begin position="146"/>
        <end position="149"/>
    </location>
</feature>
<feature type="strand" evidence="28">
    <location>
        <begin position="161"/>
        <end position="168"/>
    </location>
</feature>
<feature type="helix" evidence="28">
    <location>
        <begin position="171"/>
        <end position="173"/>
    </location>
</feature>
<feature type="strand" evidence="28">
    <location>
        <begin position="175"/>
        <end position="179"/>
    </location>
</feature>
<feature type="strand" evidence="28">
    <location>
        <begin position="182"/>
        <end position="187"/>
    </location>
</feature>
<feature type="turn" evidence="28">
    <location>
        <begin position="193"/>
        <end position="195"/>
    </location>
</feature>
<feature type="strand" evidence="28">
    <location>
        <begin position="197"/>
        <end position="209"/>
    </location>
</feature>
<feature type="strand" evidence="28">
    <location>
        <begin position="218"/>
        <end position="228"/>
    </location>
</feature>
<proteinExistence type="evidence at protein level"/>
<keyword id="KW-0002">3D-structure</keyword>
<keyword id="KW-0025">Alternative splicing</keyword>
<keyword id="KW-0106">Calcium</keyword>
<keyword id="KW-1003">Cell membrane</keyword>
<keyword id="KW-0966">Cell projection</keyword>
<keyword id="KW-0221">Differentiation</keyword>
<keyword id="KW-0325">Glycoprotein</keyword>
<keyword id="KW-0472">Membrane</keyword>
<keyword id="KW-0597">Phosphoprotein</keyword>
<keyword id="KW-1267">Proteomics identification</keyword>
<keyword id="KW-1185">Reference proteome</keyword>
<keyword id="KW-0677">Repeat</keyword>
<keyword id="KW-0732">Signal</keyword>
<keyword id="KW-0812">Transmembrane</keyword>
<keyword id="KW-1133">Transmembrane helix</keyword>
<organism evidence="21">
    <name type="scientific">Homo sapiens</name>
    <name type="common">Human</name>
    <dbReference type="NCBI Taxonomy" id="9606"/>
    <lineage>
        <taxon>Eukaryota</taxon>
        <taxon>Metazoa</taxon>
        <taxon>Chordata</taxon>
        <taxon>Craniata</taxon>
        <taxon>Vertebrata</taxon>
        <taxon>Euteleostomi</taxon>
        <taxon>Mammalia</taxon>
        <taxon>Eutheria</taxon>
        <taxon>Euarchontoglires</taxon>
        <taxon>Primates</taxon>
        <taxon>Haplorrhini</taxon>
        <taxon>Catarrhini</taxon>
        <taxon>Hominidae</taxon>
        <taxon>Homo</taxon>
    </lineage>
</organism>
<sequence>MGSWALLWPPLLFTGLLVRPPGTMAQAQYCSVNKDIFEVEENTNVTEPLVDIHVPEGQEVTLGALSTPFAFRIQGNQLFLNVTPDYEEKSLLEAQLLCQSGGTLVTQLRVFVSVLDVNDNAPEFPFKTKEIRVEEDTKVNSTVIPETQLQAEDRDKDDILFYTLQEMTAGASDYFSLVSVNRPALRLDRPLDFYERPNMTFWLLVRDTPGENVEPSHTATATLVLNVVPADLRPPWFLPCTFSDGYVCIQAQYHGAVPTGHILPSPLVLRPGPIYAEDGDRGINQPIIYSIFRGNVNGTFIIHPDSGNLTVARSVPSPMTFLLLVKGQQADLARYSVTQVTVEAVAAAGSPPRFPQRLYRGTVARGAGAGVVVKDAAAPSQPLRIQAQDPEFSDLNSAITYRITNHSHFRMEGEVVLTTTTLAQAGAFYAEVEAHNTVTSGTATTVIEIQVSEQEPPSTDVPPSPEAGGTTGPWTSTTSEVPRPPEPSQGPSTTSSGGGTGPHPPSGTTLRPPTSSTPGGPPGAENSTSHQPATPGGDTAQTPKPGTSQPMPPGVGTSTSHQPATPSGGTAQTPEPGTSQPMPPSMGTSTSHQPATPGGGTAQTPEAGTSQPMPPGMGTSTSHQPTTPGGGTAQTPEPGTSQPMPLSKSTPSSGGGPSEDKRFSVVDMAALGGVLGALLLLALLGLAVLVHKHYGPRLKCCCGKAPEPQPQGFDNQAFLPDHKANWAPVPSPTHDPKPAEAPMPAEPAPPGPASPGGAPEPPAAARAGGSPTAVRSILTKERRPEGGYKAVWFGEDIGTEADVVVLNAPTLDVDGASDSGSGDEGEGAGRGGGPYDAPGGDDSYI</sequence>
<comment type="function">
    <text evidence="11">Intermicrovillar adhesion molecule that forms, via its extracellular domain, calcium-dependent heterophilic complexes with CDHR2 on adjacent microvilli. Thereby, controls the packing of microvilli at the apical membrane of epithelial cells. Through its cytoplasmic domain, interacts with microvillus cytoplasmic proteins to form the intermicrovillar adhesion complex/IMAC. This complex plays a central role in microvilli and epithelial brush border differentiation.</text>
</comment>
<comment type="subunit">
    <text evidence="11 12 13">Part of the IMAC/intermicrovillar adhesion complex/intermicrovillar tip-link complex composed of ANKS4B, MYO7B, USH1C, CDHR2 and CDHR5 (PubMed:26812018, PubMed:32209652). Interacts (via cytoplasmic domain) with USH1C and MYO7B; required for proper localization of CDHR5 to microvilli tips and its function in brush border differentiation (PubMed:24725409).</text>
</comment>
<comment type="interaction">
    <interactant intactId="EBI-9540696">
        <id>Q9HBB8</id>
    </interactant>
    <interactant intactId="EBI-9541226">
        <id>Q9Y6N9-1</id>
        <label>USH1C</label>
    </interactant>
    <organismsDiffer>false</organismsDiffer>
    <experiments>2</experiments>
</comment>
<comment type="interaction">
    <interactant intactId="EBI-9540729">
        <id>Q9HBB8-1</id>
    </interactant>
    <interactant intactId="EBI-493793">
        <id>Q9BYE9</id>
        <label>CDHR2</label>
    </interactant>
    <organismsDiffer>false</organismsDiffer>
    <experiments>3</experiments>
</comment>
<comment type="interaction">
    <interactant intactId="EBI-9629917">
        <id>Q9HBB8-2</id>
    </interactant>
    <interactant intactId="EBI-493793">
        <id>Q9BYE9</id>
        <label>CDHR2</label>
    </interactant>
    <organismsDiffer>false</organismsDiffer>
    <experiments>3</experiments>
</comment>
<comment type="subcellular location">
    <subcellularLocation>
        <location evidence="11">Apical cell membrane</location>
        <topology evidence="11">Single-pass type I membrane protein</topology>
    </subcellularLocation>
    <subcellularLocation>
        <location evidence="11 13">Cell projection</location>
        <location evidence="11 13">Microvillus membrane</location>
        <topology evidence="11">Single-pass type I membrane protein</topology>
    </subcellularLocation>
</comment>
<comment type="alternative products">
    <event type="alternative splicing"/>
    <isoform>
        <id>Q9HBB8-1</id>
        <name evidence="6 20">1</name>
        <name evidence="15">MUCDHL-FL</name>
        <name evidence="18">MLPCDH-L</name>
        <sequence type="displayed"/>
    </isoform>
    <isoform>
        <id>Q9HBB8-2</id>
        <name evidence="20">2</name>
        <name evidence="18">MLPCDH-S</name>
        <sequence type="described" ref="VSP_050693"/>
    </isoform>
    <isoform>
        <id>Q9HBB8-4</id>
        <name>3</name>
        <sequence type="described" ref="VSP_050692"/>
    </isoform>
</comment>
<comment type="tissue specificity">
    <text evidence="7 11">Highest expression in kidney, liver, colon and small intestine. In kidney, expressed apically along brush border of proximal convoluted tubule but not in cortical collecting ducts. Isoform 1 is expressed primarily in adult small intestine and colon. Isoform 2 is highly expressed in fetal liver (PubMed:12167596). Expressed in duodenum with higher expression in enterocytes along the villus axis and lower expression in crypts (at protein level) (PubMed:24725409).</text>
</comment>
<comment type="PTM">
    <text evidence="2">N- and O-glycosylated.</text>
</comment>
<comment type="sequence caution" evidence="20">
    <conflict type="erroneous gene model prediction">
        <sequence resource="EMBL-CDS" id="AAG16730"/>
    </conflict>
</comment>
<comment type="sequence caution" evidence="20">
    <conflict type="miscellaneous discrepancy">
        <sequence resource="EMBL-CDS" id="AAG16732"/>
    </conflict>
    <text>Aberrant splicing.</text>
</comment>
<comment type="sequence caution" evidence="20">
    <conflict type="erroneous initiation">
        <sequence resource="EMBL-CDS" id="BAA91021"/>
    </conflict>
    <text>Truncated N-terminus.</text>
</comment>
<comment type="sequence caution" evidence="20">
    <conflict type="frameshift">
        <sequence resource="EMBL-CDS" id="BAA91021"/>
    </conflict>
</comment>
<comment type="sequence caution" evidence="20">
    <conflict type="miscellaneous discrepancy">
        <sequence resource="EMBL-CDS" id="BAA91021"/>
    </conflict>
    <text>Contaminating sequence. Sequence of unknown origin in the N-terminal part.</text>
</comment>
<comment type="sequence caution" evidence="20">
    <conflict type="frameshift">
        <sequence resource="EMBL-CDS" id="BAB15052"/>
    </conflict>
</comment>
<comment type="online information" name="Protein Spotlight">
    <link uri="https://www.proteinspotlight.org/back_issues/178/"/>
    <text>A tighter mesh - Issue 178 of April 2016</text>
</comment>
<accession>Q9HBB8</accession>
<accession>C9J7X1</accession>
<accession>Q9H746</accession>
<accession>Q9HAU3</accession>
<accession>Q9HBB5</accession>
<accession>Q9HBB6</accession>
<accession>Q9HBB7</accession>
<accession>Q9NX86</accession>
<accession>Q9NXI9</accession>
<gene>
    <name evidence="26" type="primary">CDHR5</name>
    <name evidence="15" type="synonym">MUCDHL</name>
    <name evidence="26" type="synonym">MUPCDH</name>
    <name evidence="23" type="ORF">UNQ2781/PRO7168</name>
</gene>
<dbReference type="EMBL" id="AF258674">
    <property type="protein sequence ID" value="AAG16730.1"/>
    <property type="status" value="ALT_SEQ"/>
    <property type="molecule type" value="Genomic_DNA"/>
</dbReference>
<dbReference type="EMBL" id="AF258674">
    <property type="protein sequence ID" value="AAG16731.1"/>
    <property type="molecule type" value="Genomic_DNA"/>
</dbReference>
<dbReference type="EMBL" id="AF258675">
    <property type="protein sequence ID" value="AAG16732.1"/>
    <property type="status" value="ALT_SEQ"/>
    <property type="molecule type" value="mRNA"/>
</dbReference>
<dbReference type="EMBL" id="AF258676">
    <property type="protein sequence ID" value="AAG16733.1"/>
    <property type="molecule type" value="mRNA"/>
</dbReference>
<dbReference type="EMBL" id="AF276242">
    <property type="protein sequence ID" value="AAG30821.1"/>
    <property type="molecule type" value="mRNA"/>
</dbReference>
<dbReference type="EMBL" id="AF301909">
    <property type="protein sequence ID" value="AAG33495.1"/>
    <property type="molecule type" value="mRNA"/>
</dbReference>
<dbReference type="EMBL" id="AY358368">
    <property type="protein sequence ID" value="AAQ88734.1"/>
    <property type="molecule type" value="mRNA"/>
</dbReference>
<dbReference type="EMBL" id="AK000226">
    <property type="protein sequence ID" value="BAA91021.1"/>
    <property type="status" value="ALT_SEQ"/>
    <property type="molecule type" value="mRNA"/>
</dbReference>
<dbReference type="EMBL" id="AK000384">
    <property type="protein sequence ID" value="BAA91130.1"/>
    <property type="molecule type" value="mRNA"/>
</dbReference>
<dbReference type="EMBL" id="AK025012">
    <property type="protein sequence ID" value="BAB15052.1"/>
    <property type="status" value="ALT_FRAME"/>
    <property type="molecule type" value="mRNA"/>
</dbReference>
<dbReference type="EMBL" id="AP006284">
    <property type="status" value="NOT_ANNOTATED_CDS"/>
    <property type="molecule type" value="Genomic_DNA"/>
</dbReference>
<dbReference type="CCDS" id="CCDS7707.1">
    <molecule id="Q9HBB8-1"/>
</dbReference>
<dbReference type="CCDS" id="CCDS7708.1">
    <molecule id="Q9HBB8-2"/>
</dbReference>
<dbReference type="CCDS" id="CCDS91397.1">
    <molecule id="Q9HBB8-4"/>
</dbReference>
<dbReference type="RefSeq" id="NP_001165439.2">
    <molecule id="Q9HBB8-4"/>
    <property type="nucleotide sequence ID" value="NM_001171968.3"/>
</dbReference>
<dbReference type="RefSeq" id="NP_068743.3">
    <molecule id="Q9HBB8-1"/>
    <property type="nucleotide sequence ID" value="NM_021924.5"/>
</dbReference>
<dbReference type="RefSeq" id="NP_112554.3">
    <molecule id="Q9HBB8-2"/>
    <property type="nucleotide sequence ID" value="NM_031264.5"/>
</dbReference>
<dbReference type="PDB" id="6OAE">
    <property type="method" value="X-ray"/>
    <property type="resolution" value="1.90 A"/>
    <property type="chains" value="A=26-232"/>
</dbReference>
<dbReference type="PDBsum" id="6OAE"/>
<dbReference type="SMR" id="Q9HBB8"/>
<dbReference type="BioGRID" id="119810">
    <property type="interactions" value="26"/>
</dbReference>
<dbReference type="FunCoup" id="Q9HBB8">
    <property type="interactions" value="24"/>
</dbReference>
<dbReference type="IntAct" id="Q9HBB8">
    <property type="interactions" value="15"/>
</dbReference>
<dbReference type="STRING" id="9606.ENSP00000380676"/>
<dbReference type="GlyConnect" id="1923">
    <property type="glycosylation" value="4 N-Linked glycans (3 sites)"/>
</dbReference>
<dbReference type="GlyCosmos" id="Q9HBB8">
    <property type="glycosylation" value="11 sites, 6 glycans"/>
</dbReference>
<dbReference type="GlyGen" id="Q9HBB8">
    <property type="glycosylation" value="14 sites, 53 N-linked glycans (4 sites), 2 O-linked glycans (3 sites)"/>
</dbReference>
<dbReference type="iPTMnet" id="Q9HBB8"/>
<dbReference type="PhosphoSitePlus" id="Q9HBB8"/>
<dbReference type="BioMuta" id="CDHR5"/>
<dbReference type="DMDM" id="296439399"/>
<dbReference type="jPOST" id="Q9HBB8"/>
<dbReference type="MassIVE" id="Q9HBB8"/>
<dbReference type="PaxDb" id="9606-ENSP00000351118"/>
<dbReference type="PeptideAtlas" id="Q9HBB8"/>
<dbReference type="ProteomicsDB" id="81519">
    <molecule id="Q9HBB8-1"/>
</dbReference>
<dbReference type="ProteomicsDB" id="81520">
    <molecule id="Q9HBB8-2"/>
</dbReference>
<dbReference type="ProteomicsDB" id="81521">
    <molecule id="Q9HBB8-4"/>
</dbReference>
<dbReference type="Antibodypedia" id="2283">
    <property type="antibodies" value="184 antibodies from 27 providers"/>
</dbReference>
<dbReference type="DNASU" id="53841"/>
<dbReference type="Ensembl" id="ENST00000349570.11">
    <molecule id="Q9HBB8-2"/>
    <property type="protein sequence ID" value="ENSP00000345726.7"/>
    <property type="gene ID" value="ENSG00000099834.19"/>
</dbReference>
<dbReference type="Ensembl" id="ENST00000358353.8">
    <molecule id="Q9HBB8-4"/>
    <property type="protein sequence ID" value="ENSP00000351118.4"/>
    <property type="gene ID" value="ENSG00000099834.19"/>
</dbReference>
<dbReference type="Ensembl" id="ENST00000397542.7">
    <molecule id="Q9HBB8-1"/>
    <property type="protein sequence ID" value="ENSP00000380676.2"/>
    <property type="gene ID" value="ENSG00000099834.19"/>
</dbReference>
<dbReference type="Ensembl" id="ENST00000674088.1">
    <molecule id="Q9HBB8-1"/>
    <property type="protein sequence ID" value="ENSP00000501074.1"/>
    <property type="gene ID" value="ENSG00000099834.19"/>
</dbReference>
<dbReference type="GeneID" id="53841"/>
<dbReference type="KEGG" id="hsa:53841"/>
<dbReference type="MANE-Select" id="ENST00000397542.7">
    <property type="protein sequence ID" value="ENSP00000380676.2"/>
    <property type="RefSeq nucleotide sequence ID" value="NM_021924.5"/>
    <property type="RefSeq protein sequence ID" value="NP_068743.3"/>
</dbReference>
<dbReference type="UCSC" id="uc001lqj.3">
    <molecule id="Q9HBB8-1"/>
    <property type="organism name" value="human"/>
</dbReference>
<dbReference type="AGR" id="HGNC:7521"/>
<dbReference type="CTD" id="53841"/>
<dbReference type="DisGeNET" id="53841"/>
<dbReference type="GeneCards" id="CDHR5"/>
<dbReference type="HGNC" id="HGNC:7521">
    <property type="gene designation" value="CDHR5"/>
</dbReference>
<dbReference type="HPA" id="ENSG00000099834">
    <property type="expression patterns" value="Group enriched (intestine, liver)"/>
</dbReference>
<dbReference type="MIM" id="606839">
    <property type="type" value="gene"/>
</dbReference>
<dbReference type="neXtProt" id="NX_Q9HBB8"/>
<dbReference type="OpenTargets" id="ENSG00000099834"/>
<dbReference type="PharmGKB" id="PA165543311"/>
<dbReference type="VEuPathDB" id="HostDB:ENSG00000099834"/>
<dbReference type="eggNOG" id="KOG3594">
    <property type="taxonomic scope" value="Eukaryota"/>
</dbReference>
<dbReference type="GeneTree" id="ENSGT00940000162463"/>
<dbReference type="InParanoid" id="Q9HBB8"/>
<dbReference type="OMA" id="PDYEANT"/>
<dbReference type="OrthoDB" id="8958491at2759"/>
<dbReference type="PAN-GO" id="Q9HBB8">
    <property type="GO annotations" value="2 GO annotations based on evolutionary models"/>
</dbReference>
<dbReference type="PhylomeDB" id="Q9HBB8"/>
<dbReference type="TreeFam" id="TF350567"/>
<dbReference type="PathwayCommons" id="Q9HBB8"/>
<dbReference type="SignaLink" id="Q9HBB8"/>
<dbReference type="BioGRID-ORCS" id="53841">
    <property type="hits" value="9 hits in 1138 CRISPR screens"/>
</dbReference>
<dbReference type="ChiTaRS" id="CDHR5">
    <property type="organism name" value="human"/>
</dbReference>
<dbReference type="GeneWiki" id="MUPCDH"/>
<dbReference type="GenomeRNAi" id="53841"/>
<dbReference type="Pharos" id="Q9HBB8">
    <property type="development level" value="Tbio"/>
</dbReference>
<dbReference type="PRO" id="PR:Q9HBB8"/>
<dbReference type="Proteomes" id="UP000005640">
    <property type="component" value="Chromosome 11"/>
</dbReference>
<dbReference type="RNAct" id="Q9HBB8">
    <property type="molecule type" value="protein"/>
</dbReference>
<dbReference type="Bgee" id="ENSG00000099834">
    <property type="expression patterns" value="Expressed in duodenum and 102 other cell types or tissues"/>
</dbReference>
<dbReference type="ExpressionAtlas" id="Q9HBB8">
    <property type="expression patterns" value="baseline and differential"/>
</dbReference>
<dbReference type="GO" id="GO:0016324">
    <property type="term" value="C:apical plasma membrane"/>
    <property type="evidence" value="ECO:0000314"/>
    <property type="project" value="UniProtKB"/>
</dbReference>
<dbReference type="GO" id="GO:0031526">
    <property type="term" value="C:brush border membrane"/>
    <property type="evidence" value="ECO:0000314"/>
    <property type="project" value="UniProtKB"/>
</dbReference>
<dbReference type="GO" id="GO:0005905">
    <property type="term" value="C:clathrin-coated pit"/>
    <property type="evidence" value="ECO:0007669"/>
    <property type="project" value="Ensembl"/>
</dbReference>
<dbReference type="GO" id="GO:0070062">
    <property type="term" value="C:extracellular exosome"/>
    <property type="evidence" value="ECO:0007005"/>
    <property type="project" value="UniProtKB"/>
</dbReference>
<dbReference type="GO" id="GO:0005902">
    <property type="term" value="C:microvillus"/>
    <property type="evidence" value="ECO:0000314"/>
    <property type="project" value="UniProtKB"/>
</dbReference>
<dbReference type="GO" id="GO:0031528">
    <property type="term" value="C:microvillus membrane"/>
    <property type="evidence" value="ECO:0000314"/>
    <property type="project" value="UniProtKB"/>
</dbReference>
<dbReference type="GO" id="GO:0005886">
    <property type="term" value="C:plasma membrane"/>
    <property type="evidence" value="ECO:0000314"/>
    <property type="project" value="UniProtKB"/>
</dbReference>
<dbReference type="GO" id="GO:0008013">
    <property type="term" value="F:beta-catenin binding"/>
    <property type="evidence" value="ECO:0000353"/>
    <property type="project" value="UniProtKB"/>
</dbReference>
<dbReference type="GO" id="GO:0005509">
    <property type="term" value="F:calcium ion binding"/>
    <property type="evidence" value="ECO:0000250"/>
    <property type="project" value="UniProtKB"/>
</dbReference>
<dbReference type="GO" id="GO:0050839">
    <property type="term" value="F:cell adhesion molecule binding"/>
    <property type="evidence" value="ECO:0000314"/>
    <property type="project" value="UniProtKB"/>
</dbReference>
<dbReference type="GO" id="GO:1904970">
    <property type="term" value="P:brush border assembly"/>
    <property type="evidence" value="ECO:0000314"/>
    <property type="project" value="UniProtKB"/>
</dbReference>
<dbReference type="GO" id="GO:0007155">
    <property type="term" value="P:cell adhesion"/>
    <property type="evidence" value="ECO:0000250"/>
    <property type="project" value="UniProtKB"/>
</dbReference>
<dbReference type="GO" id="GO:0030154">
    <property type="term" value="P:cell differentiation"/>
    <property type="evidence" value="ECO:0007669"/>
    <property type="project" value="UniProtKB-KW"/>
</dbReference>
<dbReference type="GO" id="GO:0007156">
    <property type="term" value="P:homophilic cell adhesion via plasma membrane adhesion molecules"/>
    <property type="evidence" value="ECO:0007669"/>
    <property type="project" value="InterPro"/>
</dbReference>
<dbReference type="GO" id="GO:0090675">
    <property type="term" value="P:intermicrovillar adhesion"/>
    <property type="evidence" value="ECO:0000315"/>
    <property type="project" value="UniProtKB"/>
</dbReference>
<dbReference type="GO" id="GO:0032532">
    <property type="term" value="P:regulation of microvillus length"/>
    <property type="evidence" value="ECO:0000315"/>
    <property type="project" value="UniProtKB"/>
</dbReference>
<dbReference type="CDD" id="cd11304">
    <property type="entry name" value="Cadherin_repeat"/>
    <property type="match status" value="2"/>
</dbReference>
<dbReference type="FunFam" id="2.60.40.60:FF:000261">
    <property type="entry name" value="Cadherin-related family member 5"/>
    <property type="match status" value="1"/>
</dbReference>
<dbReference type="FunFam" id="2.60.40.60:FF:000292">
    <property type="entry name" value="Cadherin-related family member 5"/>
    <property type="match status" value="1"/>
</dbReference>
<dbReference type="Gene3D" id="2.60.40.60">
    <property type="entry name" value="Cadherins"/>
    <property type="match status" value="3"/>
</dbReference>
<dbReference type="InterPro" id="IPR002126">
    <property type="entry name" value="Cadherin-like_dom"/>
</dbReference>
<dbReference type="InterPro" id="IPR015919">
    <property type="entry name" value="Cadherin-like_sf"/>
</dbReference>
<dbReference type="InterPro" id="IPR020894">
    <property type="entry name" value="Cadherin_CS"/>
</dbReference>
<dbReference type="InterPro" id="IPR050174">
    <property type="entry name" value="Protocadherin/Cadherin-CA"/>
</dbReference>
<dbReference type="PANTHER" id="PTHR24028">
    <property type="entry name" value="CADHERIN-87A"/>
    <property type="match status" value="1"/>
</dbReference>
<dbReference type="PANTHER" id="PTHR24028:SF243">
    <property type="entry name" value="CADHERIN-RELATED FAMILY MEMBER 5"/>
    <property type="match status" value="1"/>
</dbReference>
<dbReference type="SMART" id="SM00112">
    <property type="entry name" value="CA"/>
    <property type="match status" value="3"/>
</dbReference>
<dbReference type="SUPFAM" id="SSF49313">
    <property type="entry name" value="Cadherin-like"/>
    <property type="match status" value="3"/>
</dbReference>
<dbReference type="PROSITE" id="PS00232">
    <property type="entry name" value="CADHERIN_1"/>
    <property type="match status" value="1"/>
</dbReference>
<dbReference type="PROSITE" id="PS50268">
    <property type="entry name" value="CADHERIN_2"/>
    <property type="match status" value="4"/>
</dbReference>